<organism>
    <name type="scientific">Acinetobacter baumannii (strain ATCC 17978 / DSM 105126 / CIP 53.77 / LMG 1025 / NCDC KC755 / 5377)</name>
    <dbReference type="NCBI Taxonomy" id="400667"/>
    <lineage>
        <taxon>Bacteria</taxon>
        <taxon>Pseudomonadati</taxon>
        <taxon>Pseudomonadota</taxon>
        <taxon>Gammaproteobacteria</taxon>
        <taxon>Moraxellales</taxon>
        <taxon>Moraxellaceae</taxon>
        <taxon>Acinetobacter</taxon>
        <taxon>Acinetobacter calcoaceticus/baumannii complex</taxon>
    </lineage>
</organism>
<name>Y2121_ACIBT</name>
<accession>A3M6K4</accession>
<sequence>MLAQFDVNLVVLLVLLICGLLSQNAAVTIAAGILIVIKITPLNQFFPYIQAHGLNLGILILTIGVLTPIASGKLSGESILKSFISFKSLVAIAIGLLVAWLGGRGVKLMSSQPDVVAGLLIGTVAGVALLRGVPVGPLIAAGLLSLFIGK</sequence>
<keyword id="KW-1003">Cell membrane</keyword>
<keyword id="KW-0472">Membrane</keyword>
<keyword id="KW-0812">Transmembrane</keyword>
<keyword id="KW-1133">Transmembrane helix</keyword>
<dbReference type="EMBL" id="CP000521">
    <property type="protein sequence ID" value="ABO12548.2"/>
    <property type="molecule type" value="Genomic_DNA"/>
</dbReference>
<dbReference type="RefSeq" id="WP_000880860.1">
    <property type="nucleotide sequence ID" value="NZ_CP053098.1"/>
</dbReference>
<dbReference type="KEGG" id="acb:A1S_2121"/>
<dbReference type="HOGENOM" id="CLU_125889_0_0_6"/>
<dbReference type="GO" id="GO:0005886">
    <property type="term" value="C:plasma membrane"/>
    <property type="evidence" value="ECO:0007669"/>
    <property type="project" value="UniProtKB-SubCell"/>
</dbReference>
<dbReference type="HAMAP" id="MF_01874">
    <property type="entry name" value="UPF0756"/>
    <property type="match status" value="1"/>
</dbReference>
<dbReference type="InterPro" id="IPR007382">
    <property type="entry name" value="UPF0756_TM"/>
</dbReference>
<dbReference type="PANTHER" id="PTHR38452">
    <property type="entry name" value="UPF0756 MEMBRANE PROTEIN YEAL"/>
    <property type="match status" value="1"/>
</dbReference>
<dbReference type="PANTHER" id="PTHR38452:SF1">
    <property type="entry name" value="UPF0756 MEMBRANE PROTEIN YEAL"/>
    <property type="match status" value="1"/>
</dbReference>
<dbReference type="Pfam" id="PF04284">
    <property type="entry name" value="DUF441"/>
    <property type="match status" value="1"/>
</dbReference>
<proteinExistence type="inferred from homology"/>
<feature type="chain" id="PRO_0000388808" description="UPF0756 membrane protein A1S_2121">
    <location>
        <begin position="1"/>
        <end position="150"/>
    </location>
</feature>
<feature type="transmembrane region" description="Helical" evidence="1">
    <location>
        <begin position="22"/>
        <end position="42"/>
    </location>
</feature>
<feature type="transmembrane region" description="Helical" evidence="1">
    <location>
        <begin position="45"/>
        <end position="65"/>
    </location>
</feature>
<feature type="transmembrane region" description="Helical" evidence="1">
    <location>
        <begin position="83"/>
        <end position="103"/>
    </location>
</feature>
<feature type="transmembrane region" description="Helical" evidence="1">
    <location>
        <begin position="115"/>
        <end position="135"/>
    </location>
</feature>
<evidence type="ECO:0000255" key="1">
    <source>
        <dbReference type="HAMAP-Rule" id="MF_01874"/>
    </source>
</evidence>
<comment type="subcellular location">
    <subcellularLocation>
        <location evidence="1">Cell membrane</location>
        <topology evidence="1">Multi-pass membrane protein</topology>
    </subcellularLocation>
</comment>
<comment type="similarity">
    <text evidence="1">Belongs to the UPF0756 family.</text>
</comment>
<gene>
    <name type="ordered locus">A1S_2121</name>
</gene>
<protein>
    <recommendedName>
        <fullName evidence="1">UPF0756 membrane protein A1S_2121</fullName>
    </recommendedName>
</protein>
<reference key="1">
    <citation type="journal article" date="2007" name="Genes Dev.">
        <title>New insights into Acinetobacter baumannii pathogenesis revealed by high-density pyrosequencing and transposon mutagenesis.</title>
        <authorList>
            <person name="Smith M.G."/>
            <person name="Gianoulis T.A."/>
            <person name="Pukatzki S."/>
            <person name="Mekalanos J.J."/>
            <person name="Ornston L.N."/>
            <person name="Gerstein M."/>
            <person name="Snyder M."/>
        </authorList>
    </citation>
    <scope>NUCLEOTIDE SEQUENCE [LARGE SCALE GENOMIC DNA]</scope>
    <source>
        <strain>ATCC 17978 / DSM 105126 / CIP 53.77 / LMG 1025 / NCDC KC755 / 5377</strain>
    </source>
</reference>